<gene>
    <name evidence="1" type="primary">iraD</name>
    <name type="ordered locus">SPA2998</name>
</gene>
<dbReference type="EMBL" id="CP000026">
    <property type="protein sequence ID" value="AAV78835.1"/>
    <property type="status" value="ALT_INIT"/>
    <property type="molecule type" value="Genomic_DNA"/>
</dbReference>
<dbReference type="RefSeq" id="WP_016504930.1">
    <property type="nucleotide sequence ID" value="NC_006511.1"/>
</dbReference>
<dbReference type="SMR" id="Q5PMN6"/>
<dbReference type="KEGG" id="spt:SPA2998"/>
<dbReference type="HOGENOM" id="CLU_1977621_0_0_6"/>
<dbReference type="Proteomes" id="UP000008185">
    <property type="component" value="Chromosome"/>
</dbReference>
<dbReference type="GO" id="GO:0005737">
    <property type="term" value="C:cytoplasm"/>
    <property type="evidence" value="ECO:0007669"/>
    <property type="project" value="UniProtKB-SubCell"/>
</dbReference>
<dbReference type="GO" id="GO:0043856">
    <property type="term" value="F:anti-sigma factor antagonist activity"/>
    <property type="evidence" value="ECO:0007669"/>
    <property type="project" value="InterPro"/>
</dbReference>
<dbReference type="GO" id="GO:0034599">
    <property type="term" value="P:cellular response to oxidative stress"/>
    <property type="evidence" value="ECO:0007669"/>
    <property type="project" value="UniProtKB-UniRule"/>
</dbReference>
<dbReference type="GO" id="GO:0006974">
    <property type="term" value="P:DNA damage response"/>
    <property type="evidence" value="ECO:0007669"/>
    <property type="project" value="InterPro"/>
</dbReference>
<dbReference type="HAMAP" id="MF_02010">
    <property type="entry name" value="IraD"/>
    <property type="match status" value="1"/>
</dbReference>
<dbReference type="InterPro" id="IPR023776">
    <property type="entry name" value="Anti-adapt_IraD"/>
</dbReference>
<dbReference type="InterPro" id="IPR007048">
    <property type="entry name" value="IraD/Gp25-like"/>
</dbReference>
<dbReference type="NCBIfam" id="NF010727">
    <property type="entry name" value="PRK14128.1-2"/>
    <property type="match status" value="1"/>
</dbReference>
<dbReference type="Pfam" id="PF04965">
    <property type="entry name" value="GPW_gp25"/>
    <property type="match status" value="1"/>
</dbReference>
<dbReference type="SUPFAM" id="SSF160719">
    <property type="entry name" value="gpW/gp25-like"/>
    <property type="match status" value="1"/>
</dbReference>
<keyword id="KW-0963">Cytoplasm</keyword>
<keyword id="KW-0346">Stress response</keyword>
<protein>
    <recommendedName>
        <fullName evidence="1">Anti-adapter protein IraD</fullName>
    </recommendedName>
</protein>
<accession>Q5PMN6</accession>
<sequence>MMTPTIPVALFDRLLVEGISPHELVRRKLMCLFNSCVVPGGETLPPLLTRGMPEWHEVNVGDKRVLNWFCRELRAAILRYEPSINMLEVSVKDAHHQTLALSLEAMLQDEPEPLRLEIAYSNGRWR</sequence>
<organism>
    <name type="scientific">Salmonella paratyphi A (strain ATCC 9150 / SARB42)</name>
    <dbReference type="NCBI Taxonomy" id="295319"/>
    <lineage>
        <taxon>Bacteria</taxon>
        <taxon>Pseudomonadati</taxon>
        <taxon>Pseudomonadota</taxon>
        <taxon>Gammaproteobacteria</taxon>
        <taxon>Enterobacterales</taxon>
        <taxon>Enterobacteriaceae</taxon>
        <taxon>Salmonella</taxon>
    </lineage>
</organism>
<reference key="1">
    <citation type="journal article" date="2004" name="Nat. Genet.">
        <title>Comparison of genome degradation in Paratyphi A and Typhi, human-restricted serovars of Salmonella enterica that cause typhoid.</title>
        <authorList>
            <person name="McClelland M."/>
            <person name="Sanderson K.E."/>
            <person name="Clifton S.W."/>
            <person name="Latreille P."/>
            <person name="Porwollik S."/>
            <person name="Sabo A."/>
            <person name="Meyer R."/>
            <person name="Bieri T."/>
            <person name="Ozersky P."/>
            <person name="McLellan M."/>
            <person name="Harkins C.R."/>
            <person name="Wang C."/>
            <person name="Nguyen C."/>
            <person name="Berghoff A."/>
            <person name="Elliott G."/>
            <person name="Kohlberg S."/>
            <person name="Strong C."/>
            <person name="Du F."/>
            <person name="Carter J."/>
            <person name="Kremizki C."/>
            <person name="Layman D."/>
            <person name="Leonard S."/>
            <person name="Sun H."/>
            <person name="Fulton L."/>
            <person name="Nash W."/>
            <person name="Miner T."/>
            <person name="Minx P."/>
            <person name="Delehaunty K."/>
            <person name="Fronick C."/>
            <person name="Magrini V."/>
            <person name="Nhan M."/>
            <person name="Warren W."/>
            <person name="Florea L."/>
            <person name="Spieth J."/>
            <person name="Wilson R.K."/>
        </authorList>
    </citation>
    <scope>NUCLEOTIDE SEQUENCE [LARGE SCALE GENOMIC DNA]</scope>
    <source>
        <strain>ATCC 9150 / SARB42</strain>
    </source>
</reference>
<name>IRAD_SALPA</name>
<proteinExistence type="inferred from homology"/>
<evidence type="ECO:0000255" key="1">
    <source>
        <dbReference type="HAMAP-Rule" id="MF_02010"/>
    </source>
</evidence>
<evidence type="ECO:0000305" key="2"/>
<comment type="function">
    <text evidence="1">Inhibits RpoS proteolysis by regulating RssB activity, thereby increasing the stability of the sigma stress factor RpoS during oxidative stress. Its effect on RpoS stability is due to its interaction with RssB, which probably blocks the interaction of RssB with RpoS, and the consequent delivery of the RssB-RpoS complex to the ClpXP protein degradation pathway.</text>
</comment>
<comment type="subunit">
    <text evidence="1">Interacts with RssB.</text>
</comment>
<comment type="subcellular location">
    <subcellularLocation>
        <location evidence="1">Cytoplasm</location>
    </subcellularLocation>
</comment>
<comment type="similarity">
    <text evidence="1">Belongs to the GpW/Gp25 family. IraD subfamily.</text>
</comment>
<comment type="sequence caution" evidence="2">
    <conflict type="erroneous initiation">
        <sequence resource="EMBL-CDS" id="AAV78835"/>
    </conflict>
</comment>
<feature type="chain" id="PRO_0000337899" description="Anti-adapter protein IraD">
    <location>
        <begin position="1"/>
        <end position="126"/>
    </location>
</feature>